<feature type="chain" id="PRO_0000460633" description="Malvidin galactosylase UGT88C3">
    <location>
        <begin position="1"/>
        <end position="482"/>
    </location>
</feature>
<feature type="active site" description="Proton acceptor" evidence="1">
    <location>
        <position position="16"/>
    </location>
</feature>
<feature type="active site" description="Charge relay" evidence="1">
    <location>
        <position position="117"/>
    </location>
</feature>
<feature type="binding site" evidence="2">
    <location>
        <position position="279"/>
    </location>
    <ligand>
        <name>UDP</name>
        <dbReference type="ChEBI" id="CHEBI:58223"/>
    </ligand>
</feature>
<feature type="binding site" evidence="2">
    <location>
        <position position="345"/>
    </location>
    <ligand>
        <name>UDP</name>
        <dbReference type="ChEBI" id="CHEBI:58223"/>
    </ligand>
</feature>
<feature type="binding site" evidence="2">
    <location>
        <position position="349"/>
    </location>
    <ligand>
        <name>UDP</name>
        <dbReference type="ChEBI" id="CHEBI:58223"/>
    </ligand>
</feature>
<feature type="binding site" evidence="2">
    <location>
        <position position="366"/>
    </location>
    <ligand>
        <name>UDP</name>
        <dbReference type="ChEBI" id="CHEBI:58223"/>
    </ligand>
</feature>
<feature type="binding site" evidence="2">
    <location>
        <position position="370"/>
    </location>
    <ligand>
        <name>UDP</name>
        <dbReference type="ChEBI" id="CHEBI:58223"/>
    </ligand>
</feature>
<feature type="binding site" evidence="2">
    <location>
        <position position="371"/>
    </location>
    <ligand>
        <name>UDP</name>
        <dbReference type="ChEBI" id="CHEBI:58223"/>
    </ligand>
</feature>
<feature type="binding site" evidence="2">
    <location>
        <position position="374"/>
    </location>
    <ligand>
        <name>UDP</name>
        <dbReference type="ChEBI" id="CHEBI:58223"/>
    </ligand>
</feature>
<gene>
    <name evidence="4" type="primary">UGT88C3</name>
    <name evidence="5" type="ordered locus">Os07g0510400</name>
    <name evidence="5" type="ordered locus">LOC_Os07g32620</name>
    <name evidence="8" type="ORF">OsJ_24401</name>
    <name evidence="7" type="ORF">OSNPB_070510400</name>
    <name evidence="6" type="ORF">P0409B11.23</name>
</gene>
<accession>A3BK75</accession>
<accession>Q6Z4C0</accession>
<organism>
    <name type="scientific">Oryza sativa subsp. japonica</name>
    <name type="common">Rice</name>
    <dbReference type="NCBI Taxonomy" id="39947"/>
    <lineage>
        <taxon>Eukaryota</taxon>
        <taxon>Viridiplantae</taxon>
        <taxon>Streptophyta</taxon>
        <taxon>Embryophyta</taxon>
        <taxon>Tracheophyta</taxon>
        <taxon>Spermatophyta</taxon>
        <taxon>Magnoliopsida</taxon>
        <taxon>Liliopsida</taxon>
        <taxon>Poales</taxon>
        <taxon>Poaceae</taxon>
        <taxon>BOP clade</taxon>
        <taxon>Oryzoideae</taxon>
        <taxon>Oryzeae</taxon>
        <taxon>Oryzinae</taxon>
        <taxon>Oryza</taxon>
        <taxon>Oryza sativa</taxon>
    </lineage>
</organism>
<name>UGT83_ORYSJ</name>
<keyword id="KW-0256">Endoplasmic reticulum</keyword>
<keyword id="KW-0328">Glycosyltransferase</keyword>
<keyword id="KW-0539">Nucleus</keyword>
<keyword id="KW-1185">Reference proteome</keyword>
<keyword id="KW-0808">Transferase</keyword>
<proteinExistence type="evidence at protein level"/>
<dbReference type="EC" id="2.4.1.-" evidence="3"/>
<dbReference type="EMBL" id="AP005185">
    <property type="protein sequence ID" value="BAC83958.1"/>
    <property type="molecule type" value="Genomic_DNA"/>
</dbReference>
<dbReference type="EMBL" id="AP008213">
    <property type="protein sequence ID" value="BAF21668.1"/>
    <property type="molecule type" value="Genomic_DNA"/>
</dbReference>
<dbReference type="EMBL" id="AP014963">
    <property type="protein sequence ID" value="BAT01706.1"/>
    <property type="molecule type" value="Genomic_DNA"/>
</dbReference>
<dbReference type="EMBL" id="CM000144">
    <property type="protein sequence ID" value="EAZ39964.1"/>
    <property type="molecule type" value="Genomic_DNA"/>
</dbReference>
<dbReference type="EMBL" id="AK105912">
    <property type="protein sequence ID" value="BAG97434.1"/>
    <property type="molecule type" value="mRNA"/>
</dbReference>
<dbReference type="EMBL" id="AK119544">
    <property type="protein sequence ID" value="BAG99680.1"/>
    <property type="molecule type" value="mRNA"/>
</dbReference>
<dbReference type="SMR" id="A3BK75"/>
<dbReference type="CAZy" id="GT1">
    <property type="family name" value="Glycosyltransferase Family 1"/>
</dbReference>
<dbReference type="PaxDb" id="39947-Q6Z4C0"/>
<dbReference type="EnsemblPlants" id="Os07t0510400-01">
    <property type="protein sequence ID" value="Os07t0510400-01"/>
    <property type="gene ID" value="Os07g0510400"/>
</dbReference>
<dbReference type="EnsemblPlants" id="Os07t0510400-02">
    <property type="protein sequence ID" value="Os07t0510400-02"/>
    <property type="gene ID" value="Os07g0510400"/>
</dbReference>
<dbReference type="GeneID" id="4343352"/>
<dbReference type="Gramene" id="Os07t0510400-01">
    <property type="protein sequence ID" value="Os07t0510400-01"/>
    <property type="gene ID" value="Os07g0510400"/>
</dbReference>
<dbReference type="Gramene" id="Os07t0510400-02">
    <property type="protein sequence ID" value="Os07t0510400-02"/>
    <property type="gene ID" value="Os07g0510400"/>
</dbReference>
<dbReference type="KEGG" id="dosa:Os07g0510400"/>
<dbReference type="KEGG" id="osa:4343352"/>
<dbReference type="eggNOG" id="KOG1192">
    <property type="taxonomic scope" value="Eukaryota"/>
</dbReference>
<dbReference type="HOGENOM" id="CLU_001724_3_2_1"/>
<dbReference type="OMA" id="HEQNGEV"/>
<dbReference type="OrthoDB" id="5835829at2759"/>
<dbReference type="UniPathway" id="UPA00009"/>
<dbReference type="Proteomes" id="UP000000763">
    <property type="component" value="Chromosome 7"/>
</dbReference>
<dbReference type="Proteomes" id="UP000007752">
    <property type="component" value="Chromosome 7"/>
</dbReference>
<dbReference type="Proteomes" id="UP000059680">
    <property type="component" value="Chromosome 7"/>
</dbReference>
<dbReference type="GO" id="GO:0005783">
    <property type="term" value="C:endoplasmic reticulum"/>
    <property type="evidence" value="ECO:0000314"/>
    <property type="project" value="UniProtKB"/>
</dbReference>
<dbReference type="GO" id="GO:0005634">
    <property type="term" value="C:nucleus"/>
    <property type="evidence" value="ECO:0000314"/>
    <property type="project" value="UniProtKB"/>
</dbReference>
<dbReference type="GO" id="GO:0035251">
    <property type="term" value="F:UDP-glucosyltransferase activity"/>
    <property type="evidence" value="ECO:0007669"/>
    <property type="project" value="InterPro"/>
</dbReference>
<dbReference type="GO" id="GO:0008194">
    <property type="term" value="F:UDP-glycosyltransferase activity"/>
    <property type="evidence" value="ECO:0000314"/>
    <property type="project" value="UniProtKB"/>
</dbReference>
<dbReference type="GO" id="GO:0009718">
    <property type="term" value="P:anthocyanin-containing compound biosynthetic process"/>
    <property type="evidence" value="ECO:0000314"/>
    <property type="project" value="UniProtKB"/>
</dbReference>
<dbReference type="CDD" id="cd03784">
    <property type="entry name" value="GT1_Gtf-like"/>
    <property type="match status" value="1"/>
</dbReference>
<dbReference type="FunFam" id="3.40.50.2000:FF:000086">
    <property type="entry name" value="Glycosyltransferase"/>
    <property type="match status" value="1"/>
</dbReference>
<dbReference type="FunFam" id="3.40.50.2000:FF:000089">
    <property type="entry name" value="Glycosyltransferase"/>
    <property type="match status" value="1"/>
</dbReference>
<dbReference type="Gene3D" id="3.40.50.2000">
    <property type="entry name" value="Glycogen Phosphorylase B"/>
    <property type="match status" value="2"/>
</dbReference>
<dbReference type="InterPro" id="IPR050481">
    <property type="entry name" value="UDP-glycosyltransf_plant"/>
</dbReference>
<dbReference type="InterPro" id="IPR002213">
    <property type="entry name" value="UDP_glucos_trans"/>
</dbReference>
<dbReference type="PANTHER" id="PTHR48048">
    <property type="entry name" value="GLYCOSYLTRANSFERASE"/>
    <property type="match status" value="1"/>
</dbReference>
<dbReference type="PANTHER" id="PTHR48048:SF65">
    <property type="entry name" value="OS07G0510400 PROTEIN"/>
    <property type="match status" value="1"/>
</dbReference>
<dbReference type="Pfam" id="PF00201">
    <property type="entry name" value="UDPGT"/>
    <property type="match status" value="1"/>
</dbReference>
<dbReference type="SUPFAM" id="SSF53756">
    <property type="entry name" value="UDP-Glycosyltransferase/glycogen phosphorylase"/>
    <property type="match status" value="1"/>
</dbReference>
<reference key="1">
    <citation type="journal article" date="2005" name="Nature">
        <title>The map-based sequence of the rice genome.</title>
        <authorList>
            <consortium name="International rice genome sequencing project (IRGSP)"/>
        </authorList>
    </citation>
    <scope>NUCLEOTIDE SEQUENCE [LARGE SCALE GENOMIC DNA]</scope>
    <source>
        <strain>cv. Nipponbare</strain>
    </source>
</reference>
<reference key="2">
    <citation type="journal article" date="2008" name="Nucleic Acids Res.">
        <title>The rice annotation project database (RAP-DB): 2008 update.</title>
        <authorList>
            <consortium name="The rice annotation project (RAP)"/>
        </authorList>
    </citation>
    <scope>GENOME REANNOTATION</scope>
    <source>
        <strain>cv. Nipponbare</strain>
    </source>
</reference>
<reference key="3">
    <citation type="journal article" date="2013" name="Rice">
        <title>Improvement of the Oryza sativa Nipponbare reference genome using next generation sequence and optical map data.</title>
        <authorList>
            <person name="Kawahara Y."/>
            <person name="de la Bastide M."/>
            <person name="Hamilton J.P."/>
            <person name="Kanamori H."/>
            <person name="McCombie W.R."/>
            <person name="Ouyang S."/>
            <person name="Schwartz D.C."/>
            <person name="Tanaka T."/>
            <person name="Wu J."/>
            <person name="Zhou S."/>
            <person name="Childs K.L."/>
            <person name="Davidson R.M."/>
            <person name="Lin H."/>
            <person name="Quesada-Ocampo L."/>
            <person name="Vaillancourt B."/>
            <person name="Sakai H."/>
            <person name="Lee S.S."/>
            <person name="Kim J."/>
            <person name="Numa H."/>
            <person name="Itoh T."/>
            <person name="Buell C.R."/>
            <person name="Matsumoto T."/>
        </authorList>
    </citation>
    <scope>GENOME REANNOTATION</scope>
    <source>
        <strain>cv. Nipponbare</strain>
    </source>
</reference>
<reference key="4">
    <citation type="journal article" date="2005" name="PLoS Biol.">
        <title>The genomes of Oryza sativa: a history of duplications.</title>
        <authorList>
            <person name="Yu J."/>
            <person name="Wang J."/>
            <person name="Lin W."/>
            <person name="Li S."/>
            <person name="Li H."/>
            <person name="Zhou J."/>
            <person name="Ni P."/>
            <person name="Dong W."/>
            <person name="Hu S."/>
            <person name="Zeng C."/>
            <person name="Zhang J."/>
            <person name="Zhang Y."/>
            <person name="Li R."/>
            <person name="Xu Z."/>
            <person name="Li S."/>
            <person name="Li X."/>
            <person name="Zheng H."/>
            <person name="Cong L."/>
            <person name="Lin L."/>
            <person name="Yin J."/>
            <person name="Geng J."/>
            <person name="Li G."/>
            <person name="Shi J."/>
            <person name="Liu J."/>
            <person name="Lv H."/>
            <person name="Li J."/>
            <person name="Wang J."/>
            <person name="Deng Y."/>
            <person name="Ran L."/>
            <person name="Shi X."/>
            <person name="Wang X."/>
            <person name="Wu Q."/>
            <person name="Li C."/>
            <person name="Ren X."/>
            <person name="Wang J."/>
            <person name="Wang X."/>
            <person name="Li D."/>
            <person name="Liu D."/>
            <person name="Zhang X."/>
            <person name="Ji Z."/>
            <person name="Zhao W."/>
            <person name="Sun Y."/>
            <person name="Zhang Z."/>
            <person name="Bao J."/>
            <person name="Han Y."/>
            <person name="Dong L."/>
            <person name="Ji J."/>
            <person name="Chen P."/>
            <person name="Wu S."/>
            <person name="Liu J."/>
            <person name="Xiao Y."/>
            <person name="Bu D."/>
            <person name="Tan J."/>
            <person name="Yang L."/>
            <person name="Ye C."/>
            <person name="Zhang J."/>
            <person name="Xu J."/>
            <person name="Zhou Y."/>
            <person name="Yu Y."/>
            <person name="Zhang B."/>
            <person name="Zhuang S."/>
            <person name="Wei H."/>
            <person name="Liu B."/>
            <person name="Lei M."/>
            <person name="Yu H."/>
            <person name="Li Y."/>
            <person name="Xu H."/>
            <person name="Wei S."/>
            <person name="He X."/>
            <person name="Fang L."/>
            <person name="Zhang Z."/>
            <person name="Zhang Y."/>
            <person name="Huang X."/>
            <person name="Su Z."/>
            <person name="Tong W."/>
            <person name="Li J."/>
            <person name="Tong Z."/>
            <person name="Li S."/>
            <person name="Ye J."/>
            <person name="Wang L."/>
            <person name="Fang L."/>
            <person name="Lei T."/>
            <person name="Chen C.-S."/>
            <person name="Chen H.-C."/>
            <person name="Xu Z."/>
            <person name="Li H."/>
            <person name="Huang H."/>
            <person name="Zhang F."/>
            <person name="Xu H."/>
            <person name="Li N."/>
            <person name="Zhao C."/>
            <person name="Li S."/>
            <person name="Dong L."/>
            <person name="Huang Y."/>
            <person name="Li L."/>
            <person name="Xi Y."/>
            <person name="Qi Q."/>
            <person name="Li W."/>
            <person name="Zhang B."/>
            <person name="Hu W."/>
            <person name="Zhang Y."/>
            <person name="Tian X."/>
            <person name="Jiao Y."/>
            <person name="Liang X."/>
            <person name="Jin J."/>
            <person name="Gao L."/>
            <person name="Zheng W."/>
            <person name="Hao B."/>
            <person name="Liu S.-M."/>
            <person name="Wang W."/>
            <person name="Yuan L."/>
            <person name="Cao M."/>
            <person name="McDermott J."/>
            <person name="Samudrala R."/>
            <person name="Wang J."/>
            <person name="Wong G.K.-S."/>
            <person name="Yang H."/>
        </authorList>
    </citation>
    <scope>NUCLEOTIDE SEQUENCE [LARGE SCALE GENOMIC DNA]</scope>
    <source>
        <strain>cv. Nipponbare</strain>
    </source>
</reference>
<reference key="5">
    <citation type="journal article" date="2003" name="Science">
        <title>Collection, mapping, and annotation of over 28,000 cDNA clones from japonica rice.</title>
        <authorList>
            <consortium name="The rice full-length cDNA consortium"/>
        </authorList>
    </citation>
    <scope>NUCLEOTIDE SEQUENCE [LARGE SCALE MRNA]</scope>
    <source>
        <strain>cv. Nipponbare</strain>
    </source>
</reference>
<reference key="6">
    <citation type="journal article" date="2017" name="Nat. Commun.">
        <title>Differentially evolved glucosyltransferases determine natural variation of rice flavone accumulation and UV-tolerance.</title>
        <authorList>
            <person name="Peng M."/>
            <person name="Shahzad R."/>
            <person name="Gul A."/>
            <person name="Subthain H."/>
            <person name="Shen S."/>
            <person name="Lei L."/>
            <person name="Zheng Z."/>
            <person name="Zhou J."/>
            <person name="Lu D."/>
            <person name="Wang S."/>
            <person name="Nishawy E."/>
            <person name="Liu X."/>
            <person name="Tohge T."/>
            <person name="Fernie A.R."/>
            <person name="Luo J."/>
        </authorList>
    </citation>
    <scope>GENE FAMILY</scope>
    <scope>NOMENCLATURE</scope>
</reference>
<reference key="7">
    <citation type="journal article" date="2024" name="Plants (Basel)">
        <title>OsUGT88C3 encodes a UDP-glycosyltransferase responsible for biosynthesis of malvidin 3-O-galactoside in rice.</title>
        <authorList>
            <person name="Zhao S."/>
            <person name="Fu S."/>
            <person name="Cao Z."/>
            <person name="Liu H."/>
            <person name="Huang S."/>
            <person name="Li C."/>
            <person name="Zhang Z."/>
            <person name="Yang H."/>
            <person name="Wang S."/>
            <person name="Luo J."/>
            <person name="Long T."/>
        </authorList>
    </citation>
    <scope>FUNCTION</scope>
    <scope>CATALYTIC ACTIVITY</scope>
    <scope>TISSUE SPECIFICITY</scope>
    <scope>SUBCELLULAR LOCATION</scope>
    <scope>PATHWAY</scope>
    <scope>BIOPHYSICOCHEMICAL PROPERTIES</scope>
    <source>
        <strain>cv. Heibaonuo</strain>
        <strain>cv. Shenlvheishui 2</strain>
        <strain>cv. Shenlvheishui 4</strain>
    </source>
</reference>
<sequence length="482" mass="51987">MAKPTVVVLPVWGAGHFMPMIEAGKRLLRGSGGALSVTVLLMPAPTPDAAVDIAAQVKREEASGADDISFRHLPAVDMPTGHTGVEEWISRILRSHAPNVWAAIAGLDCPVAALVTDIFCTPALEVSRELGVPGYVYFPCSASMLALLLRSPGLDEEVAVEFEEMDGAIRIPGLPPVPPSALPSTMLDRKKSTYDWFVATGRGYMNATGVIVNTAAELEQSVLAAIADGRCTRGVPAPTVYPIGPVLSFPPPPEEQPHECVRWLDAQPPASVLFLCFGSKGLLPPPKVREIAAALERSGGHRFLWVLRGPPKDSRQGQRVPTDAMLDELLPEGFLERTKGRGLVWPTRAPQKEILAHAAVGGFVTHCGWNSILESLWFGVPVLPWPLDAEQHFNAFTLVAHLGVAVPLGMDRRRDNFVEAAELERAVRSLMDDASDEGRKARAKAAETRAVCRKAVEEGGSSSTAFQRLTDDIVRRGAVQIR</sequence>
<protein>
    <recommendedName>
        <fullName evidence="4">Malvidin galactosylase UGT88C3</fullName>
        <ecNumber evidence="3">2.4.1.-</ecNumber>
    </recommendedName>
    <alternativeName>
        <fullName evidence="4">UDP-glycosyltransferase 88C3</fullName>
        <shortName evidence="4">OsUGT88C3</shortName>
    </alternativeName>
</protein>
<evidence type="ECO:0000250" key="1">
    <source>
        <dbReference type="UniProtKB" id="A0A0A1HA03"/>
    </source>
</evidence>
<evidence type="ECO:0000250" key="2">
    <source>
        <dbReference type="UniProtKB" id="Q9M156"/>
    </source>
</evidence>
<evidence type="ECO:0000269" key="3">
    <source>
    </source>
</evidence>
<evidence type="ECO:0000303" key="4">
    <source>
    </source>
</evidence>
<evidence type="ECO:0000305" key="5"/>
<evidence type="ECO:0000312" key="6">
    <source>
        <dbReference type="EMBL" id="BAC83958.1"/>
    </source>
</evidence>
<evidence type="ECO:0000312" key="7">
    <source>
        <dbReference type="EMBL" id="BAT01706.1"/>
    </source>
</evidence>
<evidence type="ECO:0000312" key="8">
    <source>
        <dbReference type="EMBL" id="EAZ39964.1"/>
    </source>
</evidence>
<comment type="function">
    <text evidence="3">UDP-glycosyltransferase which uses UDP-galactose and malvidin as substrates to catalyze the biosynthesis of malvidin 3-O-galactoside, an anthocyanin conferring purple pigmentation.</text>
</comment>
<comment type="catalytic activity">
    <reaction evidence="3">
        <text>malvidin + UDP-alpha-D-galactose = malvidin 3-O-beta-D-galactoside + UDP + H(+)</text>
        <dbReference type="Rhea" id="RHEA:74131"/>
        <dbReference type="ChEBI" id="CHEBI:15378"/>
        <dbReference type="ChEBI" id="CHEBI:58223"/>
        <dbReference type="ChEBI" id="CHEBI:66914"/>
        <dbReference type="ChEBI" id="CHEBI:144781"/>
        <dbReference type="ChEBI" id="CHEBI:193100"/>
    </reaction>
    <physiologicalReaction direction="left-to-right" evidence="3">
        <dbReference type="Rhea" id="RHEA:74132"/>
    </physiologicalReaction>
</comment>
<comment type="biophysicochemical properties">
    <kinetics>
        <KM evidence="3">6.34 uM for malvidin (in the presence of UDP-galactose)</KM>
        <text evidence="3">kcat is 1.83 min(-1) with malvidin as substrate (in the presence of UDP-galactose).</text>
    </kinetics>
</comment>
<comment type="pathway">
    <text evidence="3">Pigment biosynthesis; anthocyanin biosynthesis.</text>
</comment>
<comment type="subcellular location">
    <subcellularLocation>
        <location evidence="3">Endoplasmic reticulum</location>
    </subcellularLocation>
    <subcellularLocation>
        <location evidence="3">Nucleus</location>
    </subcellularLocation>
</comment>
<comment type="tissue specificity">
    <text evidence="3">Highly expressed in leaves, sheaths, pistils and embryos, observed in stems, stem nodes and panicles, and present at low levels in roots.</text>
</comment>
<comment type="similarity">
    <text evidence="5">Belongs to the UDP-glycosyltransferase family.</text>
</comment>